<organism>
    <name type="scientific">Aspergillus sojae</name>
    <dbReference type="NCBI Taxonomy" id="41058"/>
    <lineage>
        <taxon>Eukaryota</taxon>
        <taxon>Fungi</taxon>
        <taxon>Dikarya</taxon>
        <taxon>Ascomycota</taxon>
        <taxon>Pezizomycotina</taxon>
        <taxon>Eurotiomycetes</taxon>
        <taxon>Eurotiomycetidae</taxon>
        <taxon>Eurotiales</taxon>
        <taxon>Aspergillaceae</taxon>
        <taxon>Aspergillus</taxon>
        <taxon>Aspergillus subgen. Circumdati</taxon>
    </lineage>
</organism>
<keyword id="KW-0067">ATP-binding</keyword>
<keyword id="KW-0158">Chromosome</keyword>
<keyword id="KW-0227">DNA damage</keyword>
<keyword id="KW-0233">DNA recombination</keyword>
<keyword id="KW-0234">DNA repair</keyword>
<keyword id="KW-0238">DNA-binding</keyword>
<keyword id="KW-0347">Helicase</keyword>
<keyword id="KW-0378">Hydrolase</keyword>
<keyword id="KW-0547">Nucleotide-binding</keyword>
<keyword id="KW-0539">Nucleus</keyword>
<keyword id="KW-0779">Telomere</keyword>
<name>KU80_ASPSO</name>
<protein>
    <recommendedName>
        <fullName>ATP-dependent DNA helicase II subunit 2</fullName>
        <ecNumber>3.6.4.12</ecNumber>
    </recommendedName>
    <alternativeName>
        <fullName>ATP-dependent DNA helicase II subunit Ku80</fullName>
    </alternativeName>
</protein>
<accession>Q2MHH1</accession>
<feature type="chain" id="PRO_0000278350" description="ATP-dependent DNA helicase II subunit 2">
    <location>
        <begin position="1"/>
        <end position="725"/>
    </location>
</feature>
<feature type="domain" description="Ku">
    <location>
        <begin position="229"/>
        <end position="481"/>
    </location>
</feature>
<feature type="region of interest" description="Disordered" evidence="2">
    <location>
        <begin position="259"/>
        <end position="294"/>
    </location>
</feature>
<feature type="region of interest" description="Disordered" evidence="2">
    <location>
        <begin position="704"/>
        <end position="725"/>
    </location>
</feature>
<feature type="compositionally biased region" description="Polar residues" evidence="2">
    <location>
        <begin position="285"/>
        <end position="294"/>
    </location>
</feature>
<sequence>MADKEATVYIVDVGRSMGECRNGRSVTDLEWAMQYVWDRITGTVATGRKTATMGVIGLRTDETSNELEDDVHFSHIAVLSNIKQFLMPDIRKLEDELKPSKTDKGDAISAIILAIQMIITHCKKLKYRRKIALVTNGQGRMSDEDLGEIVKKVKEDNIELVVMGIDFDDPEYGYKEEDKDPRKAENETLLRTLVEDCDGVYGTFEQAVAELDIPRVKSVRSVASFKGYLQLGNPEDYDSALRIPVERYYRTYPAKPPTASSFVLRSEPEAGQEEAESSEAAAATQKGSQSGDIGLTTVRTMRTYQVEDKSAPGGKIDIERDDLAKGYEYGRTAVHISETDENITILDTFAGLELMGFIQTDRYQRYMHMSNTNIIIAQRANDKAALALSSFIHALFELECYAVARLVVKENKPPVIVLLAPSIEPDYECLLEVQLPFAEDVRTYRFPPLDKVITVSGKVVTQHRNLPNDDLLDVMGKYVNSMELVDADEDGDPVETFPIDDSYSPVLHRIDAAIRARAIHPDQPIPPPSERLTKFSHPREDLIERSQKYLEKLIEIADVKKVPPKAKGRKRTRETEKPLSGLDVDALLHHEKRAKISPNNAIPEFKQTLAQAENIEAIKDATKQMMVIVEDQIKHSLGNANYDRVIEALGTMRDELVSYEEPASYNDFLGQLKDKLLQEKLGGDRQELWWLVRRNKLGLVTQRESDQSRVTDTEAKEVSLTKMKE</sequence>
<gene>
    <name type="primary">ku80</name>
</gene>
<dbReference type="EC" id="3.6.4.12"/>
<dbReference type="EMBL" id="AB214652">
    <property type="protein sequence ID" value="BAE78504.1"/>
    <property type="molecule type" value="Genomic_DNA"/>
</dbReference>
<dbReference type="SMR" id="Q2MHH1"/>
<dbReference type="GO" id="GO:0000781">
    <property type="term" value="C:chromosome, telomeric region"/>
    <property type="evidence" value="ECO:0007669"/>
    <property type="project" value="UniProtKB-SubCell"/>
</dbReference>
<dbReference type="GO" id="GO:0043564">
    <property type="term" value="C:Ku70:Ku80 complex"/>
    <property type="evidence" value="ECO:0007669"/>
    <property type="project" value="InterPro"/>
</dbReference>
<dbReference type="GO" id="GO:0005524">
    <property type="term" value="F:ATP binding"/>
    <property type="evidence" value="ECO:0007669"/>
    <property type="project" value="UniProtKB-KW"/>
</dbReference>
<dbReference type="GO" id="GO:0016887">
    <property type="term" value="F:ATP hydrolysis activity"/>
    <property type="evidence" value="ECO:0007669"/>
    <property type="project" value="RHEA"/>
</dbReference>
<dbReference type="GO" id="GO:0003684">
    <property type="term" value="F:damaged DNA binding"/>
    <property type="evidence" value="ECO:0007669"/>
    <property type="project" value="InterPro"/>
</dbReference>
<dbReference type="GO" id="GO:0003690">
    <property type="term" value="F:double-stranded DNA binding"/>
    <property type="evidence" value="ECO:0007669"/>
    <property type="project" value="TreeGrafter"/>
</dbReference>
<dbReference type="GO" id="GO:0004386">
    <property type="term" value="F:helicase activity"/>
    <property type="evidence" value="ECO:0007669"/>
    <property type="project" value="UniProtKB-KW"/>
</dbReference>
<dbReference type="GO" id="GO:0042162">
    <property type="term" value="F:telomeric DNA binding"/>
    <property type="evidence" value="ECO:0007669"/>
    <property type="project" value="InterPro"/>
</dbReference>
<dbReference type="GO" id="GO:0006310">
    <property type="term" value="P:DNA recombination"/>
    <property type="evidence" value="ECO:0007669"/>
    <property type="project" value="UniProtKB-KW"/>
</dbReference>
<dbReference type="GO" id="GO:0006303">
    <property type="term" value="P:double-strand break repair via nonhomologous end joining"/>
    <property type="evidence" value="ECO:0007669"/>
    <property type="project" value="InterPro"/>
</dbReference>
<dbReference type="GO" id="GO:0000723">
    <property type="term" value="P:telomere maintenance"/>
    <property type="evidence" value="ECO:0007669"/>
    <property type="project" value="InterPro"/>
</dbReference>
<dbReference type="CDD" id="cd00873">
    <property type="entry name" value="KU80"/>
    <property type="match status" value="1"/>
</dbReference>
<dbReference type="FunFam" id="1.25.40.240:FF:000002">
    <property type="entry name" value="ATP-dependent DNA helicase II subunit 2"/>
    <property type="match status" value="1"/>
</dbReference>
<dbReference type="FunFam" id="2.40.290.10:FF:000008">
    <property type="entry name" value="ATP-dependent DNA helicase II subunit 2"/>
    <property type="match status" value="1"/>
</dbReference>
<dbReference type="FunFam" id="3.40.50.410:FF:000073">
    <property type="entry name" value="ATP-dependent DNA helicase II subunit 2"/>
    <property type="match status" value="1"/>
</dbReference>
<dbReference type="FunFam" id="1.10.1600.10:FF:000002">
    <property type="entry name" value="X-ray repair cross-complementing protein 5"/>
    <property type="match status" value="1"/>
</dbReference>
<dbReference type="Gene3D" id="1.10.1600.10">
    <property type="match status" value="1"/>
</dbReference>
<dbReference type="Gene3D" id="2.40.290.10">
    <property type="match status" value="1"/>
</dbReference>
<dbReference type="Gene3D" id="1.25.40.240">
    <property type="entry name" value="Ku, C-terminal domain"/>
    <property type="match status" value="1"/>
</dbReference>
<dbReference type="Gene3D" id="3.40.50.410">
    <property type="entry name" value="von Willebrand factor, type A domain"/>
    <property type="match status" value="1"/>
</dbReference>
<dbReference type="InterPro" id="IPR006164">
    <property type="entry name" value="Ku70/Ku80_beta-barrel_dom"/>
</dbReference>
<dbReference type="InterPro" id="IPR024193">
    <property type="entry name" value="Ku80"/>
</dbReference>
<dbReference type="InterPro" id="IPR036494">
    <property type="entry name" value="Ku_C_sf"/>
</dbReference>
<dbReference type="InterPro" id="IPR005161">
    <property type="entry name" value="Ku_N"/>
</dbReference>
<dbReference type="InterPro" id="IPR014893">
    <property type="entry name" value="Ku_PK_bind"/>
</dbReference>
<dbReference type="InterPro" id="IPR016194">
    <property type="entry name" value="SPOC-like_C_dom_sf"/>
</dbReference>
<dbReference type="InterPro" id="IPR002035">
    <property type="entry name" value="VWF_A"/>
</dbReference>
<dbReference type="InterPro" id="IPR036465">
    <property type="entry name" value="vWFA_dom_sf"/>
</dbReference>
<dbReference type="PANTHER" id="PTHR12604">
    <property type="entry name" value="KU AUTOANTIGEN DNA HELICASE"/>
    <property type="match status" value="1"/>
</dbReference>
<dbReference type="PANTHER" id="PTHR12604:SF4">
    <property type="entry name" value="X-RAY REPAIR CROSS-COMPLEMENTING PROTEIN 5"/>
    <property type="match status" value="1"/>
</dbReference>
<dbReference type="Pfam" id="PF02735">
    <property type="entry name" value="Ku"/>
    <property type="match status" value="1"/>
</dbReference>
<dbReference type="Pfam" id="PF03731">
    <property type="entry name" value="Ku_N"/>
    <property type="match status" value="1"/>
</dbReference>
<dbReference type="Pfam" id="PF08785">
    <property type="entry name" value="Ku_PK_bind"/>
    <property type="match status" value="1"/>
</dbReference>
<dbReference type="PIRSF" id="PIRSF016570">
    <property type="entry name" value="Ku80"/>
    <property type="match status" value="1"/>
</dbReference>
<dbReference type="SMART" id="SM00559">
    <property type="entry name" value="Ku78"/>
    <property type="match status" value="1"/>
</dbReference>
<dbReference type="SUPFAM" id="SSF101420">
    <property type="entry name" value="C-terminal domain of Ku80"/>
    <property type="match status" value="1"/>
</dbReference>
<dbReference type="SUPFAM" id="SSF100939">
    <property type="entry name" value="SPOC domain-like"/>
    <property type="match status" value="1"/>
</dbReference>
<dbReference type="SUPFAM" id="SSF53300">
    <property type="entry name" value="vWA-like"/>
    <property type="match status" value="1"/>
</dbReference>
<comment type="function">
    <text evidence="1">Single-stranded DNA-dependent ATP-dependent helicase. Involved in non-homologous end joining (NHEJ) DNA double strand break repair. DNA-binding is sequence-independent but has a high affinity to nicks in double-stranded DNA and to the ends of duplex DNA. Binds to naturally occurring chromosomal ends, and therefore provides chromosomal end protection. Required also for telomere recombination to repair telomeric ends in the absence of telomerase. ku70, of the ku70/ku80 heterodimer, binds to the stem loop of tlc1, the RNA component of telomerase. Involved in telomere maintenance. Interacts with telomeric repeats and subtelomeric sequences thereby controlling telomere length and protecting against subtelomeric rearrangement. Maintains telomeric chromatin, which is involved in silencing the expression of genes located at the telomere. Required for mating-type switching (By similarity).</text>
</comment>
<comment type="catalytic activity">
    <reaction>
        <text>ATP + H2O = ADP + phosphate + H(+)</text>
        <dbReference type="Rhea" id="RHEA:13065"/>
        <dbReference type="ChEBI" id="CHEBI:15377"/>
        <dbReference type="ChEBI" id="CHEBI:15378"/>
        <dbReference type="ChEBI" id="CHEBI:30616"/>
        <dbReference type="ChEBI" id="CHEBI:43474"/>
        <dbReference type="ChEBI" id="CHEBI:456216"/>
        <dbReference type="EC" id="3.6.4.12"/>
    </reaction>
</comment>
<comment type="subunit">
    <text evidence="1">Heterodimer of Ku70 and Ku80.</text>
</comment>
<comment type="subcellular location">
    <subcellularLocation>
        <location evidence="1">Nucleus</location>
    </subcellularLocation>
    <subcellularLocation>
        <location evidence="1">Chromosome</location>
        <location evidence="1">Telomere</location>
    </subcellularLocation>
</comment>
<comment type="similarity">
    <text evidence="3">Belongs to the ku80 family.</text>
</comment>
<evidence type="ECO:0000250" key="1"/>
<evidence type="ECO:0000256" key="2">
    <source>
        <dbReference type="SAM" id="MobiDB-lite"/>
    </source>
</evidence>
<evidence type="ECO:0000305" key="3"/>
<proteinExistence type="inferred from homology"/>
<reference key="1">
    <citation type="journal article" date="2006" name="Biosci. Biotechnol. Biochem.">
        <title>Identification and analysis of Ku70 and Ku80 homologs in the koji molds Aspergillus sojae and Aspergillus oryzae.</title>
        <authorList>
            <person name="Takahashi T."/>
            <person name="Masuda T."/>
            <person name="Koyama Y."/>
        </authorList>
    </citation>
    <scope>NUCLEOTIDE SEQUENCE [GENOMIC DNA]</scope>
    <source>
        <strain>ATCC 46250</strain>
    </source>
</reference>